<accession>A0A7G5KLV1</accession>
<protein>
    <recommendedName>
        <fullName evidence="5">Sesquiterpene synthase TPS2</fullName>
    </recommendedName>
    <alternativeName>
        <fullName evidence="5">Beta-copaene synthase TPS2</fullName>
        <ecNumber evidence="3">4.2.3.127</ecNumber>
    </alternativeName>
    <alternativeName>
        <fullName evidence="5">Beta-cubebene synthase TPS2</fullName>
        <ecNumber evidence="3">4.2.3.128</ecNumber>
    </alternativeName>
    <alternativeName>
        <fullName evidence="5">Beta-ylangene synthase TPS2</fullName>
        <ecNumber evidence="3">4.2.3.-</ecNumber>
    </alternativeName>
    <alternativeName>
        <fullName evidence="4">Terpene synthase 2</fullName>
        <shortName evidence="4">CoTPS2</shortName>
    </alternativeName>
</protein>
<gene>
    <name evidence="4" type="primary">TPS2</name>
</gene>
<organism>
    <name type="scientific">Cananga odorata</name>
    <name type="common">Ylang-ylang tree</name>
    <name type="synonym">Uvaria odorata</name>
    <dbReference type="NCBI Taxonomy" id="13393"/>
    <lineage>
        <taxon>Eukaryota</taxon>
        <taxon>Viridiplantae</taxon>
        <taxon>Streptophyta</taxon>
        <taxon>Embryophyta</taxon>
        <taxon>Tracheophyta</taxon>
        <taxon>Spermatophyta</taxon>
        <taxon>Magnoliopsida</taxon>
        <taxon>Magnoliidae</taxon>
        <taxon>Magnoliales</taxon>
        <taxon>Annonaceae</taxon>
        <taxon>Ambavioideae</taxon>
        <taxon>Cananga</taxon>
    </lineage>
</organism>
<name>TPS2_CANOD</name>
<sequence length="561" mass="65255">MALIFANGHSDVPSTQPPIGKQKKEIGRESVNYHPSVWGDRFAILTAHEIEVDEITKQRAEKLKHDVLKMLHNVSVSLQDLNLIDEIQRLGVGYHFETEIENAMKRIYNSRDNDDDDLHAVALRFRLLRQHGYNVSSDVFKKFKDEKGEFKASLRENVRGLLSFYEAAYLGTADDTILDQAIDFTTDQLKSVLPNLNPPLSELVKLALDVPLHKRIERLQSRYFISIYQEEKERNEVLLEFAKLDFNVLQSLHKEELSQLSRWWKDNDFARKLPFIRDRLVECYFWILGVYYEPRYSRGRMMTTKVISLTSIMDDTYDVYGKLDELELLTTAIERWEWAAMDELPDYMKLHFSALLTAVENFEEELSKEGKAYRISYFKNAYTKLAKAYLEEARWASADYVPTLEEYMKHAQVSSAYPVLTLSSLLGMGATATKEAFEWAINMPNAINAISVVCRLKDDITSAELEQQRVHVATAVECYIKENGTTYEETCKLFKQKVDSAWKEINKEWMDPLQVPREIIKRAVNFARVIEFLYRYKDMYTESAGETKECIAMVLVDRFVD</sequence>
<reference key="1">
    <citation type="journal article" date="2015" name="J. Exp. Bot.">
        <title>The floral transcriptome of ylang ylang (Cananga odorata var. fruticosa) uncovers biosynthetic pathways for volatile organic compounds and a multifunctional and novel sesquiterpene synthase.</title>
        <authorList>
            <person name="Jin J."/>
            <person name="Kim M.J."/>
            <person name="Dhandapani S."/>
            <person name="Tjhang J.G."/>
            <person name="Yin J.L."/>
            <person name="Wong L."/>
            <person name="Sarojam R."/>
            <person name="Chua N.H."/>
            <person name="Jang I.C."/>
        </authorList>
    </citation>
    <scope>NUCLEOTIDE SEQUENCE [MRNA]</scope>
    <scope>FUNCTION</scope>
    <scope>CATALYTIC ACTIVITY</scope>
    <scope>SUBCELLULAR LOCATION</scope>
    <scope>MOTIF</scope>
</reference>
<evidence type="ECO:0000250" key="1">
    <source>
        <dbReference type="UniProtKB" id="Q40577"/>
    </source>
</evidence>
<evidence type="ECO:0000256" key="2">
    <source>
        <dbReference type="SAM" id="MobiDB-lite"/>
    </source>
</evidence>
<evidence type="ECO:0000269" key="3">
    <source>
    </source>
</evidence>
<evidence type="ECO:0000303" key="4">
    <source>
    </source>
</evidence>
<evidence type="ECO:0000305" key="5"/>
<evidence type="ECO:0000305" key="6">
    <source>
    </source>
</evidence>
<keyword id="KW-0963">Cytoplasm</keyword>
<keyword id="KW-0456">Lyase</keyword>
<keyword id="KW-0460">Magnesium</keyword>
<keyword id="KW-0479">Metal-binding</keyword>
<proteinExistence type="evidence at protein level"/>
<feature type="chain" id="PRO_0000455179" description="Sesquiterpene synthase TPS2">
    <location>
        <begin position="1"/>
        <end position="561"/>
    </location>
</feature>
<feature type="region of interest" description="Disordered" evidence="2">
    <location>
        <begin position="6"/>
        <end position="26"/>
    </location>
</feature>
<feature type="short sequence motif" description="DDXXD motif" evidence="6">
    <location>
        <begin position="314"/>
        <end position="318"/>
    </location>
</feature>
<feature type="binding site" evidence="1">
    <location>
        <position position="277"/>
    </location>
    <ligand>
        <name>(2E,6E)-farnesyl diphosphate</name>
        <dbReference type="ChEBI" id="CHEBI:175763"/>
    </ligand>
</feature>
<feature type="binding site" evidence="1">
    <location>
        <position position="314"/>
    </location>
    <ligand>
        <name>(2E,6E)-farnesyl diphosphate</name>
        <dbReference type="ChEBI" id="CHEBI:175763"/>
    </ligand>
</feature>
<feature type="binding site" evidence="1">
    <location>
        <position position="314"/>
    </location>
    <ligand>
        <name>Mg(2+)</name>
        <dbReference type="ChEBI" id="CHEBI:18420"/>
        <label>1</label>
    </ligand>
</feature>
<feature type="binding site" evidence="1">
    <location>
        <position position="314"/>
    </location>
    <ligand>
        <name>Mg(2+)</name>
        <dbReference type="ChEBI" id="CHEBI:18420"/>
        <label>2</label>
    </ligand>
</feature>
<feature type="binding site" evidence="1">
    <location>
        <position position="318"/>
    </location>
    <ligand>
        <name>(2E,6E)-farnesyl diphosphate</name>
        <dbReference type="ChEBI" id="CHEBI:175763"/>
    </ligand>
</feature>
<feature type="binding site" evidence="1">
    <location>
        <position position="318"/>
    </location>
    <ligand>
        <name>Mg(2+)</name>
        <dbReference type="ChEBI" id="CHEBI:18420"/>
        <label>1</label>
    </ligand>
</feature>
<feature type="binding site" evidence="1">
    <location>
        <position position="318"/>
    </location>
    <ligand>
        <name>Mg(2+)</name>
        <dbReference type="ChEBI" id="CHEBI:18420"/>
        <label>2</label>
    </ligand>
</feature>
<feature type="binding site" evidence="1">
    <location>
        <position position="455"/>
    </location>
    <ligand>
        <name>(2E,6E)-farnesyl diphosphate</name>
        <dbReference type="ChEBI" id="CHEBI:175763"/>
    </ligand>
</feature>
<feature type="binding site" evidence="1">
    <location>
        <position position="458"/>
    </location>
    <ligand>
        <name>(2E,6E)-farnesyl diphosphate</name>
        <dbReference type="ChEBI" id="CHEBI:175763"/>
    </ligand>
</feature>
<feature type="binding site" evidence="1">
    <location>
        <position position="458"/>
    </location>
    <ligand>
        <name>Mg(2+)</name>
        <dbReference type="ChEBI" id="CHEBI:18420"/>
        <label>3</label>
    </ligand>
</feature>
<feature type="binding site" evidence="1">
    <location>
        <position position="462"/>
    </location>
    <ligand>
        <name>Mg(2+)</name>
        <dbReference type="ChEBI" id="CHEBI:18420"/>
        <label>3</label>
    </ligand>
</feature>
<feature type="binding site" evidence="1">
    <location>
        <position position="466"/>
    </location>
    <ligand>
        <name>Mg(2+)</name>
        <dbReference type="ChEBI" id="CHEBI:18420"/>
        <label>3</label>
    </ligand>
</feature>
<dbReference type="EC" id="4.2.3.127" evidence="3"/>
<dbReference type="EC" id="4.2.3.128" evidence="3"/>
<dbReference type="EC" id="4.2.3.-" evidence="3"/>
<dbReference type="EMBL" id="MN230106">
    <property type="protein sequence ID" value="QMW48843.1"/>
    <property type="molecule type" value="mRNA"/>
</dbReference>
<dbReference type="SMR" id="A0A7G5KLV1"/>
<dbReference type="UniPathway" id="UPA00213"/>
<dbReference type="GO" id="GO:0005737">
    <property type="term" value="C:cytoplasm"/>
    <property type="evidence" value="ECO:0007669"/>
    <property type="project" value="UniProtKB-SubCell"/>
</dbReference>
<dbReference type="GO" id="GO:0000287">
    <property type="term" value="F:magnesium ion binding"/>
    <property type="evidence" value="ECO:0007669"/>
    <property type="project" value="InterPro"/>
</dbReference>
<dbReference type="GO" id="GO:0010333">
    <property type="term" value="F:terpene synthase activity"/>
    <property type="evidence" value="ECO:0007669"/>
    <property type="project" value="InterPro"/>
</dbReference>
<dbReference type="GO" id="GO:0016102">
    <property type="term" value="P:diterpenoid biosynthetic process"/>
    <property type="evidence" value="ECO:0007669"/>
    <property type="project" value="InterPro"/>
</dbReference>
<dbReference type="CDD" id="cd00684">
    <property type="entry name" value="Terpene_cyclase_plant_C1"/>
    <property type="match status" value="1"/>
</dbReference>
<dbReference type="FunFam" id="1.10.600.10:FF:000007">
    <property type="entry name" value="Isoprene synthase, chloroplastic"/>
    <property type="match status" value="1"/>
</dbReference>
<dbReference type="FunFam" id="1.50.10.130:FF:000001">
    <property type="entry name" value="Isoprene synthase, chloroplastic"/>
    <property type="match status" value="1"/>
</dbReference>
<dbReference type="Gene3D" id="1.10.600.10">
    <property type="entry name" value="Farnesyl Diphosphate Synthase"/>
    <property type="match status" value="1"/>
</dbReference>
<dbReference type="Gene3D" id="1.50.10.130">
    <property type="entry name" value="Terpene synthase, N-terminal domain"/>
    <property type="match status" value="1"/>
</dbReference>
<dbReference type="InterPro" id="IPR008949">
    <property type="entry name" value="Isoprenoid_synthase_dom_sf"/>
</dbReference>
<dbReference type="InterPro" id="IPR034741">
    <property type="entry name" value="Terpene_cyclase-like_1_C"/>
</dbReference>
<dbReference type="InterPro" id="IPR044814">
    <property type="entry name" value="Terpene_cyclase_plant_C1"/>
</dbReference>
<dbReference type="InterPro" id="IPR001906">
    <property type="entry name" value="Terpene_synth_N"/>
</dbReference>
<dbReference type="InterPro" id="IPR036965">
    <property type="entry name" value="Terpene_synth_N_sf"/>
</dbReference>
<dbReference type="InterPro" id="IPR050148">
    <property type="entry name" value="Terpene_synthase-like"/>
</dbReference>
<dbReference type="InterPro" id="IPR005630">
    <property type="entry name" value="Terpene_synthase_metal-bd"/>
</dbReference>
<dbReference type="InterPro" id="IPR008930">
    <property type="entry name" value="Terpenoid_cyclase/PrenylTrfase"/>
</dbReference>
<dbReference type="PANTHER" id="PTHR31225:SF93">
    <property type="entry name" value="ALPHA-HUMULENE_(-)-(E)-BETA-CARYOPHYLLENE SYNTHASE"/>
    <property type="match status" value="1"/>
</dbReference>
<dbReference type="PANTHER" id="PTHR31225">
    <property type="entry name" value="OS04G0344100 PROTEIN-RELATED"/>
    <property type="match status" value="1"/>
</dbReference>
<dbReference type="Pfam" id="PF01397">
    <property type="entry name" value="Terpene_synth"/>
    <property type="match status" value="1"/>
</dbReference>
<dbReference type="Pfam" id="PF03936">
    <property type="entry name" value="Terpene_synth_C"/>
    <property type="match status" value="1"/>
</dbReference>
<dbReference type="SFLD" id="SFLDS00005">
    <property type="entry name" value="Isoprenoid_Synthase_Type_I"/>
    <property type="match status" value="1"/>
</dbReference>
<dbReference type="SFLD" id="SFLDG01019">
    <property type="entry name" value="Terpene_Cyclase_Like_1_C_Termi"/>
    <property type="match status" value="1"/>
</dbReference>
<dbReference type="SUPFAM" id="SSF48239">
    <property type="entry name" value="Terpenoid cyclases/Protein prenyltransferases"/>
    <property type="match status" value="1"/>
</dbReference>
<dbReference type="SUPFAM" id="SSF48576">
    <property type="entry name" value="Terpenoid synthases"/>
    <property type="match status" value="1"/>
</dbReference>
<comment type="function">
    <text evidence="3">Sesquiterpene synthase involved in the biosynthesis of volatile organic compounds (PubMed:25956881). Mediates the conversion of (2E,6E)-farnesyl diphosphate (FPP) into beta-ylangene, beta-copaene and beta-cubebene (PubMed:25956881). Does not use (2E)-geranyl diphosphate (GPP) as substrate (PubMed:25956881).</text>
</comment>
<comment type="catalytic activity">
    <reaction evidence="3">
        <text>(2E,6E)-farnesyl diphosphate = beta-ylangene + diphosphate</text>
        <dbReference type="Rhea" id="RHEA:69775"/>
        <dbReference type="ChEBI" id="CHEBI:33019"/>
        <dbReference type="ChEBI" id="CHEBI:175763"/>
        <dbReference type="ChEBI" id="CHEBI:188453"/>
    </reaction>
    <physiologicalReaction direction="left-to-right" evidence="3">
        <dbReference type="Rhea" id="RHEA:69776"/>
    </physiologicalReaction>
</comment>
<comment type="catalytic activity">
    <reaction evidence="3">
        <text>(2E,6E)-farnesyl diphosphate = beta-copaene + diphosphate</text>
        <dbReference type="Rhea" id="RHEA:33111"/>
        <dbReference type="ChEBI" id="CHEBI:33019"/>
        <dbReference type="ChEBI" id="CHEBI:64799"/>
        <dbReference type="ChEBI" id="CHEBI:175763"/>
        <dbReference type="EC" id="4.2.3.127"/>
    </reaction>
    <physiologicalReaction direction="left-to-right" evidence="3">
        <dbReference type="Rhea" id="RHEA:33112"/>
    </physiologicalReaction>
</comment>
<comment type="catalytic activity">
    <reaction evidence="3">
        <text>(2E,6E)-farnesyl diphosphate = beta-cubebene + diphosphate</text>
        <dbReference type="Rhea" id="RHEA:32019"/>
        <dbReference type="ChEBI" id="CHEBI:10363"/>
        <dbReference type="ChEBI" id="CHEBI:33019"/>
        <dbReference type="ChEBI" id="CHEBI:175763"/>
        <dbReference type="EC" id="4.2.3.128"/>
    </reaction>
    <physiologicalReaction direction="left-to-right" evidence="3">
        <dbReference type="Rhea" id="RHEA:32020"/>
    </physiologicalReaction>
</comment>
<comment type="cofactor">
    <cofactor evidence="1">
        <name>Mg(2+)</name>
        <dbReference type="ChEBI" id="CHEBI:18420"/>
    </cofactor>
    <text evidence="1">Binds 3 Mg(2+) ions per subunit.</text>
</comment>
<comment type="pathway">
    <text evidence="5">Secondary metabolite biosynthesis; terpenoid biosynthesis.</text>
</comment>
<comment type="subunit">
    <text evidence="1">Monomer.</text>
</comment>
<comment type="subcellular location">
    <subcellularLocation>
        <location evidence="3">Cytoplasm</location>
    </subcellularLocation>
</comment>
<comment type="domain">
    <text evidence="6">The Asp-Asp-Xaa-Xaa-Asp/Glu (DDXXD/E) motif is important for the catalytic activity, presumably through binding to Mg(2+).</text>
</comment>
<comment type="similarity">
    <text evidence="5">Belongs to the terpene synthase family. Tpsa subfamily.</text>
</comment>